<evidence type="ECO:0000255" key="1">
    <source>
        <dbReference type="HAMAP-Rule" id="MF_00228"/>
    </source>
</evidence>
<comment type="function">
    <text evidence="1">Catalyzes the phosphorylation of the hydroxyl group of 4-methyl-5-beta-hydroxyethylthiazole (THZ).</text>
</comment>
<comment type="catalytic activity">
    <reaction evidence="1">
        <text>5-(2-hydroxyethyl)-4-methylthiazole + ATP = 4-methyl-5-(2-phosphooxyethyl)-thiazole + ADP + H(+)</text>
        <dbReference type="Rhea" id="RHEA:24212"/>
        <dbReference type="ChEBI" id="CHEBI:15378"/>
        <dbReference type="ChEBI" id="CHEBI:17957"/>
        <dbReference type="ChEBI" id="CHEBI:30616"/>
        <dbReference type="ChEBI" id="CHEBI:58296"/>
        <dbReference type="ChEBI" id="CHEBI:456216"/>
        <dbReference type="EC" id="2.7.1.50"/>
    </reaction>
</comment>
<comment type="cofactor">
    <cofactor evidence="1">
        <name>Mg(2+)</name>
        <dbReference type="ChEBI" id="CHEBI:18420"/>
    </cofactor>
</comment>
<comment type="pathway">
    <text evidence="1">Cofactor biosynthesis; thiamine diphosphate biosynthesis; 4-methyl-5-(2-phosphoethyl)-thiazole from 5-(2-hydroxyethyl)-4-methylthiazole: step 1/1.</text>
</comment>
<comment type="similarity">
    <text evidence="1">Belongs to the Thz kinase family.</text>
</comment>
<accession>Q04YC8</accession>
<gene>
    <name evidence="1" type="primary">thiM</name>
    <name type="ordered locus">LBL_2553</name>
</gene>
<reference key="1">
    <citation type="journal article" date="2006" name="Proc. Natl. Acad. Sci. U.S.A.">
        <title>Genome reduction in Leptospira borgpetersenii reflects limited transmission potential.</title>
        <authorList>
            <person name="Bulach D.M."/>
            <person name="Zuerner R.L."/>
            <person name="Wilson P."/>
            <person name="Seemann T."/>
            <person name="McGrath A."/>
            <person name="Cullen P.A."/>
            <person name="Davis J."/>
            <person name="Johnson M."/>
            <person name="Kuczek E."/>
            <person name="Alt D.P."/>
            <person name="Peterson-Burch B."/>
            <person name="Coppel R.L."/>
            <person name="Rood J.I."/>
            <person name="Davies J.K."/>
            <person name="Adler B."/>
        </authorList>
    </citation>
    <scope>NUCLEOTIDE SEQUENCE [LARGE SCALE GENOMIC DNA]</scope>
    <source>
        <strain>L550</strain>
    </source>
</reference>
<feature type="chain" id="PRO_1000021517" description="Hydroxyethylthiazole kinase">
    <location>
        <begin position="1"/>
        <end position="264"/>
    </location>
</feature>
<feature type="binding site" evidence="1">
    <location>
        <position position="55"/>
    </location>
    <ligand>
        <name>substrate</name>
    </ligand>
</feature>
<feature type="binding site" evidence="1">
    <location>
        <position position="130"/>
    </location>
    <ligand>
        <name>ATP</name>
        <dbReference type="ChEBI" id="CHEBI:30616"/>
    </ligand>
</feature>
<feature type="binding site" evidence="1">
    <location>
        <position position="176"/>
    </location>
    <ligand>
        <name>ATP</name>
        <dbReference type="ChEBI" id="CHEBI:30616"/>
    </ligand>
</feature>
<feature type="binding site" evidence="1">
    <location>
        <position position="203"/>
    </location>
    <ligand>
        <name>substrate</name>
    </ligand>
</feature>
<organism>
    <name type="scientific">Leptospira borgpetersenii serovar Hardjo-bovis (strain L550)</name>
    <dbReference type="NCBI Taxonomy" id="355276"/>
    <lineage>
        <taxon>Bacteria</taxon>
        <taxon>Pseudomonadati</taxon>
        <taxon>Spirochaetota</taxon>
        <taxon>Spirochaetia</taxon>
        <taxon>Leptospirales</taxon>
        <taxon>Leptospiraceae</taxon>
        <taxon>Leptospira</taxon>
    </lineage>
</organism>
<proteinExistence type="inferred from homology"/>
<dbReference type="EC" id="2.7.1.50" evidence="1"/>
<dbReference type="EMBL" id="CP000348">
    <property type="protein sequence ID" value="ABJ79917.1"/>
    <property type="molecule type" value="Genomic_DNA"/>
</dbReference>
<dbReference type="RefSeq" id="WP_002738770.1">
    <property type="nucleotide sequence ID" value="NC_008508.1"/>
</dbReference>
<dbReference type="SMR" id="Q04YC8"/>
<dbReference type="KEGG" id="lbl:LBL_2553"/>
<dbReference type="HOGENOM" id="CLU_019943_0_1_12"/>
<dbReference type="UniPathway" id="UPA00060">
    <property type="reaction ID" value="UER00139"/>
</dbReference>
<dbReference type="GO" id="GO:0005524">
    <property type="term" value="F:ATP binding"/>
    <property type="evidence" value="ECO:0007669"/>
    <property type="project" value="UniProtKB-UniRule"/>
</dbReference>
<dbReference type="GO" id="GO:0004417">
    <property type="term" value="F:hydroxyethylthiazole kinase activity"/>
    <property type="evidence" value="ECO:0007669"/>
    <property type="project" value="UniProtKB-UniRule"/>
</dbReference>
<dbReference type="GO" id="GO:0000287">
    <property type="term" value="F:magnesium ion binding"/>
    <property type="evidence" value="ECO:0007669"/>
    <property type="project" value="UniProtKB-UniRule"/>
</dbReference>
<dbReference type="GO" id="GO:0009228">
    <property type="term" value="P:thiamine biosynthetic process"/>
    <property type="evidence" value="ECO:0007669"/>
    <property type="project" value="UniProtKB-KW"/>
</dbReference>
<dbReference type="GO" id="GO:0009229">
    <property type="term" value="P:thiamine diphosphate biosynthetic process"/>
    <property type="evidence" value="ECO:0007669"/>
    <property type="project" value="UniProtKB-UniRule"/>
</dbReference>
<dbReference type="CDD" id="cd01170">
    <property type="entry name" value="THZ_kinase"/>
    <property type="match status" value="1"/>
</dbReference>
<dbReference type="Gene3D" id="3.40.1190.20">
    <property type="match status" value="1"/>
</dbReference>
<dbReference type="HAMAP" id="MF_00228">
    <property type="entry name" value="Thz_kinase"/>
    <property type="match status" value="1"/>
</dbReference>
<dbReference type="InterPro" id="IPR000417">
    <property type="entry name" value="Hyethyz_kinase"/>
</dbReference>
<dbReference type="InterPro" id="IPR029056">
    <property type="entry name" value="Ribokinase-like"/>
</dbReference>
<dbReference type="NCBIfam" id="NF006830">
    <property type="entry name" value="PRK09355.1"/>
    <property type="match status" value="1"/>
</dbReference>
<dbReference type="NCBIfam" id="TIGR00694">
    <property type="entry name" value="thiM"/>
    <property type="match status" value="1"/>
</dbReference>
<dbReference type="Pfam" id="PF02110">
    <property type="entry name" value="HK"/>
    <property type="match status" value="1"/>
</dbReference>
<dbReference type="PIRSF" id="PIRSF000513">
    <property type="entry name" value="Thz_kinase"/>
    <property type="match status" value="1"/>
</dbReference>
<dbReference type="PRINTS" id="PR01099">
    <property type="entry name" value="HYETHTZKNASE"/>
</dbReference>
<dbReference type="SUPFAM" id="SSF53613">
    <property type="entry name" value="Ribokinase-like"/>
    <property type="match status" value="1"/>
</dbReference>
<sequence>MPKHSALERAWPAKEIVEDLLELRKRSPLTHIMTNIVVTNWTANVLLAVGASPAMVIAEEEAGEFVKIANGLLINVGTITSNDAKAMKIAATVAHQTNTPWVLDPVAVGALGFRTETTKKLLDLKPTVIRGNASEILTLAGIAGKGKGVDSTVNSKDALPYAQELSGKTGAVVAVSGEVDYVTNGKETIEIYGGDPIMTKVTGVGCSLGALIASFLGIQKDPLRASASASAVFAIAGSRSAKKSNGPGSFAINFIDQLSQLSIE</sequence>
<protein>
    <recommendedName>
        <fullName evidence="1">Hydroxyethylthiazole kinase</fullName>
        <ecNumber evidence="1">2.7.1.50</ecNumber>
    </recommendedName>
    <alternativeName>
        <fullName evidence="1">4-methyl-5-beta-hydroxyethylthiazole kinase</fullName>
        <shortName evidence="1">TH kinase</shortName>
        <shortName evidence="1">Thz kinase</shortName>
    </alternativeName>
</protein>
<name>THIM_LEPBL</name>
<keyword id="KW-0067">ATP-binding</keyword>
<keyword id="KW-0418">Kinase</keyword>
<keyword id="KW-0460">Magnesium</keyword>
<keyword id="KW-0479">Metal-binding</keyword>
<keyword id="KW-0547">Nucleotide-binding</keyword>
<keyword id="KW-0784">Thiamine biosynthesis</keyword>
<keyword id="KW-0808">Transferase</keyword>